<name>BZP10_ARATH</name>
<proteinExistence type="evidence at protein level"/>
<dbReference type="EMBL" id="AJ010859">
    <property type="protein sequence ID" value="CAC79657.1"/>
    <property type="molecule type" value="mRNA"/>
</dbReference>
<dbReference type="EMBL" id="AF310222">
    <property type="protein sequence ID" value="AAG25727.1"/>
    <property type="molecule type" value="mRNA"/>
</dbReference>
<dbReference type="EMBL" id="AC002330">
    <property type="protein sequence ID" value="AAC78255.1"/>
    <property type="molecule type" value="Genomic_DNA"/>
</dbReference>
<dbReference type="EMBL" id="AL161494">
    <property type="protein sequence ID" value="CAB80757.1"/>
    <property type="molecule type" value="Genomic_DNA"/>
</dbReference>
<dbReference type="EMBL" id="CP002687">
    <property type="protein sequence ID" value="AEE82207.1"/>
    <property type="molecule type" value="Genomic_DNA"/>
</dbReference>
<dbReference type="EMBL" id="CP002687">
    <property type="protein sequence ID" value="AEE82208.1"/>
    <property type="molecule type" value="Genomic_DNA"/>
</dbReference>
<dbReference type="EMBL" id="CP002687">
    <property type="protein sequence ID" value="ANM67475.1"/>
    <property type="molecule type" value="Genomic_DNA"/>
</dbReference>
<dbReference type="EMBL" id="AK318728">
    <property type="protein sequence ID" value="BAH56843.1"/>
    <property type="molecule type" value="mRNA"/>
</dbReference>
<dbReference type="EMBL" id="AY080854">
    <property type="protein sequence ID" value="AAL87327.1"/>
    <property type="molecule type" value="mRNA"/>
</dbReference>
<dbReference type="EMBL" id="BT025558">
    <property type="protein sequence ID" value="ABF58976.1"/>
    <property type="molecule type" value="mRNA"/>
</dbReference>
<dbReference type="EMBL" id="AY088417">
    <property type="protein sequence ID" value="AAM65954.1"/>
    <property type="molecule type" value="mRNA"/>
</dbReference>
<dbReference type="PIR" id="T01085">
    <property type="entry name" value="T01085"/>
</dbReference>
<dbReference type="RefSeq" id="NP_001329303.1">
    <molecule id="O22763-2"/>
    <property type="nucleotide sequence ID" value="NM_001340390.1"/>
</dbReference>
<dbReference type="RefSeq" id="NP_192173.1">
    <molecule id="O22763-1"/>
    <property type="nucleotide sequence ID" value="NM_116498.4"/>
</dbReference>
<dbReference type="RefSeq" id="NP_849290.1">
    <molecule id="O22763-3"/>
    <property type="nucleotide sequence ID" value="NM_178959.3"/>
</dbReference>
<dbReference type="SMR" id="O22763"/>
<dbReference type="BioGRID" id="13508">
    <property type="interactions" value="24"/>
</dbReference>
<dbReference type="FunCoup" id="O22763">
    <property type="interactions" value="769"/>
</dbReference>
<dbReference type="IntAct" id="O22763">
    <property type="interactions" value="23"/>
</dbReference>
<dbReference type="MINT" id="O22763"/>
<dbReference type="STRING" id="3702.O22763"/>
<dbReference type="GlyGen" id="O22763">
    <property type="glycosylation" value="1 site"/>
</dbReference>
<dbReference type="iPTMnet" id="O22763"/>
<dbReference type="PaxDb" id="3702-AT4G02640.2"/>
<dbReference type="ProteomicsDB" id="240555">
    <molecule id="O22763-1"/>
</dbReference>
<dbReference type="EnsemblPlants" id="AT4G02640.1">
    <molecule id="O22763-1"/>
    <property type="protein sequence ID" value="AT4G02640.1"/>
    <property type="gene ID" value="AT4G02640"/>
</dbReference>
<dbReference type="EnsemblPlants" id="AT4G02640.2">
    <molecule id="O22763-3"/>
    <property type="protein sequence ID" value="AT4G02640.2"/>
    <property type="gene ID" value="AT4G02640"/>
</dbReference>
<dbReference type="EnsemblPlants" id="AT4G02640.4">
    <molecule id="O22763-2"/>
    <property type="protein sequence ID" value="AT4G02640.4"/>
    <property type="gene ID" value="AT4G02640"/>
</dbReference>
<dbReference type="GeneID" id="828219"/>
<dbReference type="Gramene" id="AT4G02640.1">
    <molecule id="O22763-1"/>
    <property type="protein sequence ID" value="AT4G02640.1"/>
    <property type="gene ID" value="AT4G02640"/>
</dbReference>
<dbReference type="Gramene" id="AT4G02640.2">
    <molecule id="O22763-3"/>
    <property type="protein sequence ID" value="AT4G02640.2"/>
    <property type="gene ID" value="AT4G02640"/>
</dbReference>
<dbReference type="Gramene" id="AT4G02640.4">
    <molecule id="O22763-2"/>
    <property type="protein sequence ID" value="AT4G02640.4"/>
    <property type="gene ID" value="AT4G02640"/>
</dbReference>
<dbReference type="KEGG" id="ath:AT4G02640"/>
<dbReference type="Araport" id="AT4G02640"/>
<dbReference type="TAIR" id="AT4G02640">
    <property type="gene designation" value="BZO2H1"/>
</dbReference>
<dbReference type="eggNOG" id="ENOG502QX6A">
    <property type="taxonomic scope" value="Eukaryota"/>
</dbReference>
<dbReference type="HOGENOM" id="CLU_037575_1_1_1"/>
<dbReference type="InParanoid" id="O22763"/>
<dbReference type="OrthoDB" id="664875at2759"/>
<dbReference type="PhylomeDB" id="O22763"/>
<dbReference type="PRO" id="PR:O22763"/>
<dbReference type="Proteomes" id="UP000006548">
    <property type="component" value="Chromosome 4"/>
</dbReference>
<dbReference type="ExpressionAtlas" id="O22763">
    <property type="expression patterns" value="baseline and differential"/>
</dbReference>
<dbReference type="GO" id="GO:0005737">
    <property type="term" value="C:cytoplasm"/>
    <property type="evidence" value="ECO:0000314"/>
    <property type="project" value="TAIR"/>
</dbReference>
<dbReference type="GO" id="GO:0005634">
    <property type="term" value="C:nucleus"/>
    <property type="evidence" value="ECO:0000314"/>
    <property type="project" value="UniProtKB"/>
</dbReference>
<dbReference type="GO" id="GO:0003700">
    <property type="term" value="F:DNA-binding transcription factor activity"/>
    <property type="evidence" value="ECO:0000314"/>
    <property type="project" value="UniProtKB"/>
</dbReference>
<dbReference type="GO" id="GO:0045735">
    <property type="term" value="F:nutrient reservoir activity"/>
    <property type="evidence" value="ECO:0007669"/>
    <property type="project" value="UniProtKB-KW"/>
</dbReference>
<dbReference type="GO" id="GO:0046982">
    <property type="term" value="F:protein heterodimerization activity"/>
    <property type="evidence" value="ECO:0000353"/>
    <property type="project" value="UniProtKB"/>
</dbReference>
<dbReference type="GO" id="GO:0043565">
    <property type="term" value="F:sequence-specific DNA binding"/>
    <property type="evidence" value="ECO:0000314"/>
    <property type="project" value="TAIR"/>
</dbReference>
<dbReference type="GO" id="GO:0000976">
    <property type="term" value="F:transcription cis-regulatory region binding"/>
    <property type="evidence" value="ECO:0000353"/>
    <property type="project" value="TAIR"/>
</dbReference>
<dbReference type="GO" id="GO:0009626">
    <property type="term" value="P:plant-type hypersensitive response"/>
    <property type="evidence" value="ECO:0000315"/>
    <property type="project" value="TAIR"/>
</dbReference>
<dbReference type="GO" id="GO:0045893">
    <property type="term" value="P:positive regulation of DNA-templated transcription"/>
    <property type="evidence" value="ECO:0000314"/>
    <property type="project" value="UniProtKB"/>
</dbReference>
<dbReference type="GO" id="GO:2000693">
    <property type="term" value="P:positive regulation of seed maturation"/>
    <property type="evidence" value="ECO:0000314"/>
    <property type="project" value="UniProtKB"/>
</dbReference>
<dbReference type="GO" id="GO:0002240">
    <property type="term" value="P:response to molecule of oomycetes origin"/>
    <property type="evidence" value="ECO:0000315"/>
    <property type="project" value="TAIR"/>
</dbReference>
<dbReference type="FunFam" id="1.20.5.170:FF:000020">
    <property type="entry name" value="BZIP transcription factor"/>
    <property type="match status" value="1"/>
</dbReference>
<dbReference type="Gene3D" id="1.20.5.170">
    <property type="match status" value="1"/>
</dbReference>
<dbReference type="InterPro" id="IPR020983">
    <property type="entry name" value="Basic_leucine-zipper_C"/>
</dbReference>
<dbReference type="InterPro" id="IPR004827">
    <property type="entry name" value="bZIP"/>
</dbReference>
<dbReference type="InterPro" id="IPR046347">
    <property type="entry name" value="bZIP_sf"/>
</dbReference>
<dbReference type="PANTHER" id="PTHR46408:SF5">
    <property type="entry name" value="BASIC LEUCINE ZIPPER 10"/>
    <property type="match status" value="1"/>
</dbReference>
<dbReference type="PANTHER" id="PTHR46408">
    <property type="entry name" value="BASIC LEUCINE ZIPPER 63"/>
    <property type="match status" value="1"/>
</dbReference>
<dbReference type="Pfam" id="PF00170">
    <property type="entry name" value="bZIP_1"/>
    <property type="match status" value="1"/>
</dbReference>
<dbReference type="Pfam" id="PF12498">
    <property type="entry name" value="bZIP_C"/>
    <property type="match status" value="1"/>
</dbReference>
<dbReference type="SMART" id="SM00338">
    <property type="entry name" value="BRLZ"/>
    <property type="match status" value="1"/>
</dbReference>
<dbReference type="SUPFAM" id="SSF57959">
    <property type="entry name" value="Leucine zipper domain"/>
    <property type="match status" value="1"/>
</dbReference>
<dbReference type="PROSITE" id="PS50217">
    <property type="entry name" value="BZIP"/>
    <property type="match status" value="1"/>
</dbReference>
<dbReference type="PROSITE" id="PS00036">
    <property type="entry name" value="BZIP_BASIC"/>
    <property type="match status" value="1"/>
</dbReference>
<gene>
    <name type="primary">BZIP10</name>
    <name type="synonym">BZO2H1</name>
    <name type="ordered locus">At4g02640</name>
    <name type="ORF">T10P11.9</name>
</gene>
<reference key="1">
    <citation type="journal article" date="2003" name="J. Biol. Chem.">
        <title>Synergistic activation of seed storage protein gene expression in Arabidopsis by ABI3 and two bZIPs related to OPAQUE2.</title>
        <authorList>
            <person name="Lara P."/>
            <person name="Onate-Sanchez L."/>
            <person name="Abraham Z."/>
            <person name="Ferrandiz C."/>
            <person name="Diaz I."/>
            <person name="Carbonero P."/>
            <person name="Vicente-Carbajosa J."/>
        </authorList>
    </citation>
    <scope>NUCLEOTIDE SEQUENCE [MRNA] (ISOFORM 1)</scope>
    <scope>FUNCTION</scope>
    <scope>DEVELOPMENTAL STAGE</scope>
    <scope>TISSUE SPECIFICITY</scope>
    <scope>INTERACTION WITH ABI3</scope>
    <scope>GENE FAMILY</scope>
    <source>
        <strain>cv. Columbia</strain>
    </source>
</reference>
<reference key="2">
    <citation type="journal article" date="2003" name="J. Mol. Evol.">
        <title>Evolutionary pattern of angiosperm bZIP factors homologous to the maize Opaque2 regulatory protein.</title>
        <authorList>
            <person name="Vincentz M."/>
            <person name="Bandeira-Kobarg C."/>
            <person name="Gauer L."/>
            <person name="Schloegl P."/>
            <person name="Leite A."/>
        </authorList>
    </citation>
    <scope>NUCLEOTIDE SEQUENCE [MRNA] (ISOFORM 3)</scope>
    <scope>GENE FAMILY</scope>
    <source>
        <strain>cv. Columbia</strain>
    </source>
</reference>
<reference key="3">
    <citation type="journal article" date="1999" name="Nature">
        <title>Sequence and analysis of chromosome 4 of the plant Arabidopsis thaliana.</title>
        <authorList>
            <person name="Mayer K.F.X."/>
            <person name="Schueller C."/>
            <person name="Wambutt R."/>
            <person name="Murphy G."/>
            <person name="Volckaert G."/>
            <person name="Pohl T."/>
            <person name="Duesterhoeft A."/>
            <person name="Stiekema W."/>
            <person name="Entian K.-D."/>
            <person name="Terryn N."/>
            <person name="Harris B."/>
            <person name="Ansorge W."/>
            <person name="Brandt P."/>
            <person name="Grivell L.A."/>
            <person name="Rieger M."/>
            <person name="Weichselgartner M."/>
            <person name="de Simone V."/>
            <person name="Obermaier B."/>
            <person name="Mache R."/>
            <person name="Mueller M."/>
            <person name="Kreis M."/>
            <person name="Delseny M."/>
            <person name="Puigdomenech P."/>
            <person name="Watson M."/>
            <person name="Schmidtheini T."/>
            <person name="Reichert B."/>
            <person name="Portetelle D."/>
            <person name="Perez-Alonso M."/>
            <person name="Boutry M."/>
            <person name="Bancroft I."/>
            <person name="Vos P."/>
            <person name="Hoheisel J."/>
            <person name="Zimmermann W."/>
            <person name="Wedler H."/>
            <person name="Ridley P."/>
            <person name="Langham S.-A."/>
            <person name="McCullagh B."/>
            <person name="Bilham L."/>
            <person name="Robben J."/>
            <person name="van der Schueren J."/>
            <person name="Grymonprez B."/>
            <person name="Chuang Y.-J."/>
            <person name="Vandenbussche F."/>
            <person name="Braeken M."/>
            <person name="Weltjens I."/>
            <person name="Voet M."/>
            <person name="Bastiaens I."/>
            <person name="Aert R."/>
            <person name="Defoor E."/>
            <person name="Weitzenegger T."/>
            <person name="Bothe G."/>
            <person name="Ramsperger U."/>
            <person name="Hilbert H."/>
            <person name="Braun M."/>
            <person name="Holzer E."/>
            <person name="Brandt A."/>
            <person name="Peters S."/>
            <person name="van Staveren M."/>
            <person name="Dirkse W."/>
            <person name="Mooijman P."/>
            <person name="Klein Lankhorst R."/>
            <person name="Rose M."/>
            <person name="Hauf J."/>
            <person name="Koetter P."/>
            <person name="Berneiser S."/>
            <person name="Hempel S."/>
            <person name="Feldpausch M."/>
            <person name="Lamberth S."/>
            <person name="Van den Daele H."/>
            <person name="De Keyser A."/>
            <person name="Buysshaert C."/>
            <person name="Gielen J."/>
            <person name="Villarroel R."/>
            <person name="De Clercq R."/>
            <person name="van Montagu M."/>
            <person name="Rogers J."/>
            <person name="Cronin A."/>
            <person name="Quail M.A."/>
            <person name="Bray-Allen S."/>
            <person name="Clark L."/>
            <person name="Doggett J."/>
            <person name="Hall S."/>
            <person name="Kay M."/>
            <person name="Lennard N."/>
            <person name="McLay K."/>
            <person name="Mayes R."/>
            <person name="Pettett A."/>
            <person name="Rajandream M.A."/>
            <person name="Lyne M."/>
            <person name="Benes V."/>
            <person name="Rechmann S."/>
            <person name="Borkova D."/>
            <person name="Bloecker H."/>
            <person name="Scharfe M."/>
            <person name="Grimm M."/>
            <person name="Loehnert T.-H."/>
            <person name="Dose S."/>
            <person name="de Haan M."/>
            <person name="Maarse A.C."/>
            <person name="Schaefer M."/>
            <person name="Mueller-Auer S."/>
            <person name="Gabel C."/>
            <person name="Fuchs M."/>
            <person name="Fartmann B."/>
            <person name="Granderath K."/>
            <person name="Dauner D."/>
            <person name="Herzl A."/>
            <person name="Neumann S."/>
            <person name="Argiriou A."/>
            <person name="Vitale D."/>
            <person name="Liguori R."/>
            <person name="Piravandi E."/>
            <person name="Massenet O."/>
            <person name="Quigley F."/>
            <person name="Clabauld G."/>
            <person name="Muendlein A."/>
            <person name="Felber R."/>
            <person name="Schnabl S."/>
            <person name="Hiller R."/>
            <person name="Schmidt W."/>
            <person name="Lecharny A."/>
            <person name="Aubourg S."/>
            <person name="Chefdor F."/>
            <person name="Cooke R."/>
            <person name="Berger C."/>
            <person name="Monfort A."/>
            <person name="Casacuberta E."/>
            <person name="Gibbons T."/>
            <person name="Weber N."/>
            <person name="Vandenbol M."/>
            <person name="Bargues M."/>
            <person name="Terol J."/>
            <person name="Torres A."/>
            <person name="Perez-Perez A."/>
            <person name="Purnelle B."/>
            <person name="Bent E."/>
            <person name="Johnson S."/>
            <person name="Tacon D."/>
            <person name="Jesse T."/>
            <person name="Heijnen L."/>
            <person name="Schwarz S."/>
            <person name="Scholler P."/>
            <person name="Heber S."/>
            <person name="Francs P."/>
            <person name="Bielke C."/>
            <person name="Frishman D."/>
            <person name="Haase D."/>
            <person name="Lemcke K."/>
            <person name="Mewes H.-W."/>
            <person name="Stocker S."/>
            <person name="Zaccaria P."/>
            <person name="Bevan M."/>
            <person name="Wilson R.K."/>
            <person name="de la Bastide M."/>
            <person name="Habermann K."/>
            <person name="Parnell L."/>
            <person name="Dedhia N."/>
            <person name="Gnoj L."/>
            <person name="Schutz K."/>
            <person name="Huang E."/>
            <person name="Spiegel L."/>
            <person name="Sekhon M."/>
            <person name="Murray J."/>
            <person name="Sheet P."/>
            <person name="Cordes M."/>
            <person name="Abu-Threideh J."/>
            <person name="Stoneking T."/>
            <person name="Kalicki J."/>
            <person name="Graves T."/>
            <person name="Harmon G."/>
            <person name="Edwards J."/>
            <person name="Latreille P."/>
            <person name="Courtney L."/>
            <person name="Cloud J."/>
            <person name="Abbott A."/>
            <person name="Scott K."/>
            <person name="Johnson D."/>
            <person name="Minx P."/>
            <person name="Bentley D."/>
            <person name="Fulton B."/>
            <person name="Miller N."/>
            <person name="Greco T."/>
            <person name="Kemp K."/>
            <person name="Kramer J."/>
            <person name="Fulton L."/>
            <person name="Mardis E."/>
            <person name="Dante M."/>
            <person name="Pepin K."/>
            <person name="Hillier L.W."/>
            <person name="Nelson J."/>
            <person name="Spieth J."/>
            <person name="Ryan E."/>
            <person name="Andrews S."/>
            <person name="Geisel C."/>
            <person name="Layman D."/>
            <person name="Du H."/>
            <person name="Ali J."/>
            <person name="Berghoff A."/>
            <person name="Jones K."/>
            <person name="Drone K."/>
            <person name="Cotton M."/>
            <person name="Joshu C."/>
            <person name="Antonoiu B."/>
            <person name="Zidanic M."/>
            <person name="Strong C."/>
            <person name="Sun H."/>
            <person name="Lamar B."/>
            <person name="Yordan C."/>
            <person name="Ma P."/>
            <person name="Zhong J."/>
            <person name="Preston R."/>
            <person name="Vil D."/>
            <person name="Shekher M."/>
            <person name="Matero A."/>
            <person name="Shah R."/>
            <person name="Swaby I.K."/>
            <person name="O'Shaughnessy A."/>
            <person name="Rodriguez M."/>
            <person name="Hoffman J."/>
            <person name="Till S."/>
            <person name="Granat S."/>
            <person name="Shohdy N."/>
            <person name="Hasegawa A."/>
            <person name="Hameed A."/>
            <person name="Lodhi M."/>
            <person name="Johnson A."/>
            <person name="Chen E."/>
            <person name="Marra M.A."/>
            <person name="Martienssen R."/>
            <person name="McCombie W.R."/>
        </authorList>
    </citation>
    <scope>NUCLEOTIDE SEQUENCE [LARGE SCALE GENOMIC DNA]</scope>
    <source>
        <strain>cv. Columbia</strain>
    </source>
</reference>
<reference key="4">
    <citation type="journal article" date="2017" name="Plant J.">
        <title>Araport11: a complete reannotation of the Arabidopsis thaliana reference genome.</title>
        <authorList>
            <person name="Cheng C.Y."/>
            <person name="Krishnakumar V."/>
            <person name="Chan A.P."/>
            <person name="Thibaud-Nissen F."/>
            <person name="Schobel S."/>
            <person name="Town C.D."/>
        </authorList>
    </citation>
    <scope>GENOME REANNOTATION</scope>
    <source>
        <strain>cv. Columbia</strain>
    </source>
</reference>
<reference key="5">
    <citation type="journal article" date="2009" name="DNA Res.">
        <title>Analysis of multiple occurrences of alternative splicing events in Arabidopsis thaliana using novel sequenced full-length cDNAs.</title>
        <authorList>
            <person name="Iida K."/>
            <person name="Fukami-Kobayashi K."/>
            <person name="Toyoda A."/>
            <person name="Sakaki Y."/>
            <person name="Kobayashi M."/>
            <person name="Seki M."/>
            <person name="Shinozaki K."/>
        </authorList>
    </citation>
    <scope>NUCLEOTIDE SEQUENCE [LARGE SCALE MRNA] (ISOFORM 2)</scope>
    <source>
        <strain>cv. Columbia</strain>
        <tissue>Root</tissue>
    </source>
</reference>
<reference key="6">
    <citation type="journal article" date="2003" name="Science">
        <title>Empirical analysis of transcriptional activity in the Arabidopsis genome.</title>
        <authorList>
            <person name="Yamada K."/>
            <person name="Lim J."/>
            <person name="Dale J.M."/>
            <person name="Chen H."/>
            <person name="Shinn P."/>
            <person name="Palm C.J."/>
            <person name="Southwick A.M."/>
            <person name="Wu H.C."/>
            <person name="Kim C.J."/>
            <person name="Nguyen M."/>
            <person name="Pham P.K."/>
            <person name="Cheuk R.F."/>
            <person name="Karlin-Newmann G."/>
            <person name="Liu S.X."/>
            <person name="Lam B."/>
            <person name="Sakano H."/>
            <person name="Wu T."/>
            <person name="Yu G."/>
            <person name="Miranda M."/>
            <person name="Quach H.L."/>
            <person name="Tripp M."/>
            <person name="Chang C.H."/>
            <person name="Lee J.M."/>
            <person name="Toriumi M.J."/>
            <person name="Chan M.M."/>
            <person name="Tang C.C."/>
            <person name="Onodera C.S."/>
            <person name="Deng J.M."/>
            <person name="Akiyama K."/>
            <person name="Ansari Y."/>
            <person name="Arakawa T."/>
            <person name="Banh J."/>
            <person name="Banno F."/>
            <person name="Bowser L."/>
            <person name="Brooks S.Y."/>
            <person name="Carninci P."/>
            <person name="Chao Q."/>
            <person name="Choy N."/>
            <person name="Enju A."/>
            <person name="Goldsmith A.D."/>
            <person name="Gurjal M."/>
            <person name="Hansen N.F."/>
            <person name="Hayashizaki Y."/>
            <person name="Johnson-Hopson C."/>
            <person name="Hsuan V.W."/>
            <person name="Iida K."/>
            <person name="Karnes M."/>
            <person name="Khan S."/>
            <person name="Koesema E."/>
            <person name="Ishida J."/>
            <person name="Jiang P.X."/>
            <person name="Jones T."/>
            <person name="Kawai J."/>
            <person name="Kamiya A."/>
            <person name="Meyers C."/>
            <person name="Nakajima M."/>
            <person name="Narusaka M."/>
            <person name="Seki M."/>
            <person name="Sakurai T."/>
            <person name="Satou M."/>
            <person name="Tamse R."/>
            <person name="Vaysberg M."/>
            <person name="Wallender E.K."/>
            <person name="Wong C."/>
            <person name="Yamamura Y."/>
            <person name="Yuan S."/>
            <person name="Shinozaki K."/>
            <person name="Davis R.W."/>
            <person name="Theologis A."/>
            <person name="Ecker J.R."/>
        </authorList>
    </citation>
    <scope>NUCLEOTIDE SEQUENCE [LARGE SCALE MRNA] OF 8-411 (ISOFORM 1)</scope>
    <source>
        <strain>cv. Columbia</strain>
    </source>
</reference>
<reference key="7">
    <citation type="submission" date="2006-05" db="EMBL/GenBank/DDBJ databases">
        <title>Arabidopsis ORF clones.</title>
        <authorList>
            <person name="Shinn P."/>
            <person name="Chen H."/>
            <person name="Kim C.J."/>
            <person name="Quinitio C."/>
            <person name="Ecker J.R."/>
        </authorList>
    </citation>
    <scope>NUCLEOTIDE SEQUENCE [LARGE SCALE MRNA] (ISOFORM 3)</scope>
    <source>
        <strain>cv. Columbia</strain>
    </source>
</reference>
<reference key="8">
    <citation type="submission" date="2002-03" db="EMBL/GenBank/DDBJ databases">
        <title>Full-length cDNA from Arabidopsis thaliana.</title>
        <authorList>
            <person name="Brover V.V."/>
            <person name="Troukhan M.E."/>
            <person name="Alexandrov N.A."/>
            <person name="Lu Y.-P."/>
            <person name="Flavell R.B."/>
            <person name="Feldmann K.A."/>
        </authorList>
    </citation>
    <scope>NUCLEOTIDE SEQUENCE [LARGE SCALE MRNA] (ISOFORM 1)</scope>
</reference>
<reference key="9">
    <citation type="journal article" date="2002" name="Trends Plant Sci.">
        <title>bZIP transcription factors in Arabidopsis.</title>
        <authorList>
            <person name="Jakoby M."/>
            <person name="Weisshaar B."/>
            <person name="Droege-Laser W."/>
            <person name="Vicente-Carbajosa J."/>
            <person name="Tiedemann J."/>
            <person name="Kroj T."/>
            <person name="Parcy F."/>
        </authorList>
    </citation>
    <scope>GENE FAMILY</scope>
    <scope>NOMENCLATURE</scope>
</reference>
<reference key="10">
    <citation type="journal article" date="2006" name="EMBO J.">
        <title>Combinatorial control of Arabidopsis proline dehydrogenase transcription by specific heterodimerisation of bZIP transcription factors.</title>
        <authorList>
            <person name="Weltmeier F."/>
            <person name="Ehlert A."/>
            <person name="Mayer C.S."/>
            <person name="Dietrich K."/>
            <person name="Wang X."/>
            <person name="Schuetze K."/>
            <person name="Alonso R."/>
            <person name="Harter K."/>
            <person name="Vicente-Carbajosa J."/>
            <person name="Droege-Laser W."/>
        </authorList>
    </citation>
    <scope>FUNCTION</scope>
    <scope>INTERACTION WITH BZIP53</scope>
</reference>
<reference key="11">
    <citation type="journal article" date="2006" name="EMBO J.">
        <title>bZIP10-LSD1 antagonism modulates basal defense and cell death in Arabidopsis following infection.</title>
        <authorList>
            <person name="Kaminaka H."/>
            <person name="Naeke C."/>
            <person name="Epple P."/>
            <person name="Dittgen J."/>
            <person name="Schuetze K."/>
            <person name="Chaban C."/>
            <person name="Holt B.F. III"/>
            <person name="Merkle T."/>
            <person name="Schaefer E."/>
            <person name="Harter K."/>
            <person name="Dangl J.L."/>
        </authorList>
    </citation>
    <scope>FUNCTION IN DEFENSE RESPONSES HYALOPERONOSPORA PARASITICA</scope>
    <scope>SUBCELLULAR LOCATION</scope>
    <scope>INTERACTION WITH LSD1</scope>
    <source>
        <strain>cv. Columbia</strain>
    </source>
</reference>
<reference key="12">
    <citation type="journal article" date="2006" name="Plant J.">
        <title>Two-hybrid protein-protein interaction analysis in Arabidopsis protoplasts: establishment of a heterodimerization map of group C and group S bZIP transcription factors.</title>
        <authorList>
            <person name="Ehlert A."/>
            <person name="Weltmeier F."/>
            <person name="Wang X."/>
            <person name="Mayer C.S."/>
            <person name="Smeekens S."/>
            <person name="Vicente-Carbajosa J."/>
            <person name="Droege-Laser W."/>
        </authorList>
    </citation>
    <scope>INTERACTION WITH BZIP1; BZIP2; BZIP9; BZIP11; BZIP44; BZIP53 AND BZIP63</scope>
</reference>
<reference key="13">
    <citation type="journal article" date="2009" name="Plant Cell">
        <title>A pivotal role of the basic leucine zipper transcription factor bZIP53 in the regulation of Arabidopsis seed maturation gene expression based on heterodimerization and protein complex formation.</title>
        <authorList>
            <person name="Alonso R."/>
            <person name="Onate-Sanchez L."/>
            <person name="Weltmeier F."/>
            <person name="Ehlert A."/>
            <person name="Diaz I."/>
            <person name="Dietrich K."/>
            <person name="Vicente-Carbajosa J."/>
            <person name="Droege-Laser W."/>
        </authorList>
    </citation>
    <scope>FUNCTION</scope>
    <scope>INTERACTION WITH BZIP53 AND ABI3</scope>
</reference>
<reference key="14">
    <citation type="journal article" date="2009" name="Plant Mol. Biol.">
        <title>Expression patterns within the Arabidopsis C/S1 bZIP transcription factor network: availability of heterodimerization partners controls gene expression during stress response and development.</title>
        <authorList>
            <person name="Weltmeier F."/>
            <person name="Rahmani F."/>
            <person name="Ehlert A."/>
            <person name="Dietrich K."/>
            <person name="Schuetze K."/>
            <person name="Wang X."/>
            <person name="Chaban C."/>
            <person name="Hanson J."/>
            <person name="Teige M."/>
            <person name="Harter K."/>
            <person name="Vicente-Carbajosa J."/>
            <person name="Smeekens S."/>
            <person name="Droege-Laser W."/>
        </authorList>
    </citation>
    <scope>TISSUE SPECIFICITY</scope>
    <scope>DEVELOPMENTAL STAGE</scope>
    <source>
        <strain>cv. Columbia</strain>
    </source>
</reference>
<reference key="15">
    <citation type="journal article" date="2009" name="Plant Physiol.">
        <title>A nuclear gene encoding the iron-sulfur subunit of mitochondrial complex II is regulated by B3 domain transcription factors during seed development in Arabidopsis.</title>
        <authorList>
            <person name="Roschzttardtz H."/>
            <person name="Fuentes I."/>
            <person name="Vasquez M."/>
            <person name="Corvalan C."/>
            <person name="Leon G."/>
            <person name="Gomez I."/>
            <person name="Araya A."/>
            <person name="Holuigue L."/>
            <person name="Vicente-Carbajosa J."/>
            <person name="Jordana X."/>
        </authorList>
    </citation>
    <scope>FUNCTION</scope>
    <scope>INTERACTION WITH BZIP53</scope>
</reference>
<reference key="16">
    <citation type="journal article" date="2010" name="Mol. Plant">
        <title>The arabidopsis bZIP1 transcription factor is involved in sugar signaling, protein networking, and DNA binding.</title>
        <authorList>
            <person name="Kang S.G."/>
            <person name="Price J."/>
            <person name="Lin P.-C."/>
            <person name="Hong J.C."/>
            <person name="Jang J.-C."/>
        </authorList>
    </citation>
    <scope>INTERACTION WITH BZIP1 AND BZIP63</scope>
</reference>
<protein>
    <recommendedName>
        <fullName>Basic leucine zipper 10</fullName>
        <shortName>AtbZIP10</shortName>
        <shortName>bZIP protein 10</shortName>
    </recommendedName>
    <alternativeName>
        <fullName>Basic leucine zipper OPAQUE 2 homolog 1</fullName>
        <shortName>Basic leucine zipper O2 homolog 1</shortName>
    </alternativeName>
</protein>
<keyword id="KW-0025">Alternative splicing</keyword>
<keyword id="KW-0963">Cytoplasm</keyword>
<keyword id="KW-0238">DNA-binding</keyword>
<keyword id="KW-0381">Hypersensitive response</keyword>
<keyword id="KW-0539">Nucleus</keyword>
<keyword id="KW-0597">Phosphoprotein</keyword>
<keyword id="KW-0611">Plant defense</keyword>
<keyword id="KW-1185">Reference proteome</keyword>
<keyword id="KW-0708">Seed storage protein</keyword>
<keyword id="KW-0758">Storage protein</keyword>
<keyword id="KW-0804">Transcription</keyword>
<keyword id="KW-0805">Transcription regulation</keyword>
<comment type="function">
    <text evidence="5 7 8 10 11">Transcription factor that binds to the C-box-like motif (5'-TGCTGACGTCA-3') and G-box-like motif (5'-CCACGTGGCC-3'), ABRE elements, of gene promoters. Binds to the 5'-ACGT-3' motif of seed storage protein (SSP) encoding gene promoters (e.g. At2S and CRU3) and promotes their expression in seeds when in complex with ABI3 and BZIP53. Involved in the defense responses to the biotrophic pathogen Hyaloperonospora parasitica and oxidative stress responses; mediates positively cell death (PubMed:12657652, PubMed:16957775, PubMed:19261733, PubMed:19531597). Promotes BZIP53-mediated response to hypoosmolarity stress that leads to POX1/PRODH1 accumulation (PubMed:16810321).</text>
</comment>
<comment type="subunit">
    <text evidence="5 6 7 8 10 11 12">Forms a heterodimer with BZIP1, BZIP2, BZIP9, BZIP11, BZIP44, BZIP53 and BZIP63. Interacts with ABI3 and forms a complex made of ABI3, BZIP53 and BZIP10. Binding with LSD1 leads to cytoplasmic retention.</text>
</comment>
<comment type="interaction">
    <interactant intactId="EBI-942648">
        <id>O22763</id>
    </interactant>
    <interactant intactId="EBI-942623">
        <id>Q9FGX2</id>
        <label>BZIP1</label>
    </interactant>
    <organismsDiffer>false</organismsDiffer>
    <experiments>3</experiments>
</comment>
<comment type="interaction">
    <interactant intactId="EBI-942648">
        <id>O22763</id>
    </interactant>
    <interactant intactId="EBI-942769">
        <id>O65683</id>
        <label>BZIP11</label>
    </interactant>
    <organismsDiffer>false</organismsDiffer>
    <experiments>3</experiments>
</comment>
<comment type="interaction">
    <interactant intactId="EBI-942648">
        <id>O22763</id>
    </interactant>
    <interactant intactId="EBI-942735">
        <id>Q9SI15</id>
        <label>BZIP2</label>
    </interactant>
    <organismsDiffer>false</organismsDiffer>
    <experiments>3</experiments>
</comment>
<comment type="interaction">
    <interactant intactId="EBI-942648">
        <id>O22763</id>
    </interactant>
    <interactant intactId="EBI-942804">
        <id>C0Z2L5</id>
        <label>BZIP44</label>
    </interactant>
    <organismsDiffer>false</organismsDiffer>
    <experiments>3</experiments>
</comment>
<comment type="interaction">
    <interactant intactId="EBI-942648">
        <id>O22763</id>
    </interactant>
    <interactant intactId="EBI-942845">
        <id>Q9LZP8</id>
        <label>BZIP53</label>
    </interactant>
    <organismsDiffer>false</organismsDiffer>
    <experiments>8</experiments>
</comment>
<comment type="interaction">
    <interactant intactId="EBI-15191815">
        <id>O22763-3</id>
    </interactant>
    <interactant intactId="EBI-15191817">
        <id>B9DGI8-2</id>
        <label>BZIP63</label>
    </interactant>
    <organismsDiffer>false</organismsDiffer>
    <experiments>3</experiments>
</comment>
<comment type="interaction">
    <interactant intactId="EBI-15191815">
        <id>O22763-3</id>
    </interactant>
    <interactant intactId="EBI-15191747">
        <id>Q9SFV2</id>
        <label>FHA2</label>
    </interactant>
    <organismsDiffer>false</organismsDiffer>
    <experiments>3</experiments>
</comment>
<comment type="subcellular location">
    <subcellularLocation>
        <location evidence="3 8">Nucleus</location>
    </subcellularLocation>
    <subcellularLocation>
        <location evidence="8">Cytoplasm</location>
    </subcellularLocation>
    <text>Shuttles between the nucleus and the cytoplasm. Retained outside the nucleus by LSD1 to prevent cell death.</text>
</comment>
<comment type="alternative products">
    <event type="alternative splicing"/>
    <isoform>
        <id>O22763-1</id>
        <name>1</name>
        <sequence type="displayed"/>
    </isoform>
    <isoform>
        <id>O22763-2</id>
        <name>2</name>
        <sequence type="described" ref="VSP_042640"/>
    </isoform>
    <isoform>
        <id>O22763-3</id>
        <name>3</name>
        <sequence type="described" ref="VSP_042639"/>
    </isoform>
</comment>
<comment type="tissue specificity">
    <text evidence="5 9">Expressed in roots, shoots, stems, young leaves, trichomes, hydathodes, siliques, seeds, and flowers, mostly in vascular tissues.</text>
</comment>
<comment type="developmental stage">
    <text evidence="5 9">First observed in carpels and seeds at early stages of development, mostly in embryo and, at lower extent, in the endosperm. Accumulates and peaks at maturation. Fade out during late seed development steps, restricted to the inner layer of the seed coat, and, at very low levels, in the mature embryo and the remaining endosperm. Also present in the lignified inner subepidermal layer of the valves. In the anthers, restricted to the connective tissue at pre- and post-dehiscence stages and detected in the vascular tissue of the stamen filament.</text>
</comment>
<comment type="similarity">
    <text evidence="16">Belongs to the bZIP family.</text>
</comment>
<feature type="chain" id="PRO_0000416558" description="Basic leucine zipper 10">
    <location>
        <begin position="1"/>
        <end position="411"/>
    </location>
</feature>
<feature type="domain" description="bZIP" evidence="3">
    <location>
        <begin position="215"/>
        <end position="278"/>
    </location>
</feature>
<feature type="region of interest" description="Disordered" evidence="4">
    <location>
        <begin position="1"/>
        <end position="36"/>
    </location>
</feature>
<feature type="region of interest" description="Disordered" evidence="4">
    <location>
        <begin position="76"/>
        <end position="99"/>
    </location>
</feature>
<feature type="region of interest" description="Disordered" evidence="4">
    <location>
        <begin position="140"/>
        <end position="251"/>
    </location>
</feature>
<feature type="region of interest" description="Basic motif" evidence="3">
    <location>
        <begin position="217"/>
        <end position="236"/>
    </location>
</feature>
<feature type="region of interest" description="Leucine-zipper" evidence="3">
    <location>
        <begin position="243"/>
        <end position="257"/>
    </location>
</feature>
<feature type="region of interest" description="Disordered" evidence="4">
    <location>
        <begin position="362"/>
        <end position="411"/>
    </location>
</feature>
<feature type="short sequence motif" description="Nuclear localization signal" evidence="1">
    <location>
        <begin position="219"/>
        <end position="226"/>
    </location>
</feature>
<feature type="compositionally biased region" description="Polar residues" evidence="4">
    <location>
        <begin position="24"/>
        <end position="36"/>
    </location>
</feature>
<feature type="compositionally biased region" description="Basic and acidic residues" evidence="4">
    <location>
        <begin position="89"/>
        <end position="98"/>
    </location>
</feature>
<feature type="compositionally biased region" description="Polar residues" evidence="4">
    <location>
        <begin position="146"/>
        <end position="173"/>
    </location>
</feature>
<feature type="compositionally biased region" description="Polar residues" evidence="4">
    <location>
        <begin position="183"/>
        <end position="193"/>
    </location>
</feature>
<feature type="compositionally biased region" description="Acidic residues" evidence="4">
    <location>
        <begin position="196"/>
        <end position="206"/>
    </location>
</feature>
<feature type="compositionally biased region" description="Polar residues" evidence="4">
    <location>
        <begin position="368"/>
        <end position="390"/>
    </location>
</feature>
<feature type="modified residue" description="Phosphoserine" evidence="2">
    <location>
        <position position="196"/>
    </location>
</feature>
<feature type="splice variant" id="VSP_042639" description="In isoform 3." evidence="13 15">
    <original>Q</original>
    <variation>QGSLMTP</variation>
    <location>
        <position position="164"/>
    </location>
</feature>
<feature type="splice variant" id="VSP_042640" description="In isoform 2." evidence="14">
    <location>
        <begin position="406"/>
        <end position="411"/>
    </location>
</feature>
<evidence type="ECO:0000250" key="1"/>
<evidence type="ECO:0000250" key="2">
    <source>
        <dbReference type="UniProtKB" id="Q9M1G6"/>
    </source>
</evidence>
<evidence type="ECO:0000255" key="3">
    <source>
        <dbReference type="PROSITE-ProRule" id="PRU00978"/>
    </source>
</evidence>
<evidence type="ECO:0000256" key="4">
    <source>
        <dbReference type="SAM" id="MobiDB-lite"/>
    </source>
</evidence>
<evidence type="ECO:0000269" key="5">
    <source>
    </source>
</evidence>
<evidence type="ECO:0000269" key="6">
    <source>
    </source>
</evidence>
<evidence type="ECO:0000269" key="7">
    <source>
    </source>
</evidence>
<evidence type="ECO:0000269" key="8">
    <source>
    </source>
</evidence>
<evidence type="ECO:0000269" key="9">
    <source>
    </source>
</evidence>
<evidence type="ECO:0000269" key="10">
    <source>
    </source>
</evidence>
<evidence type="ECO:0000269" key="11">
    <source>
    </source>
</evidence>
<evidence type="ECO:0000269" key="12">
    <source>
    </source>
</evidence>
<evidence type="ECO:0000303" key="13">
    <source>
    </source>
</evidence>
<evidence type="ECO:0000303" key="14">
    <source>
    </source>
</evidence>
<evidence type="ECO:0000303" key="15">
    <source ref="7"/>
</evidence>
<evidence type="ECO:0000305" key="16"/>
<organism>
    <name type="scientific">Arabidopsis thaliana</name>
    <name type="common">Mouse-ear cress</name>
    <dbReference type="NCBI Taxonomy" id="3702"/>
    <lineage>
        <taxon>Eukaryota</taxon>
        <taxon>Viridiplantae</taxon>
        <taxon>Streptophyta</taxon>
        <taxon>Embryophyta</taxon>
        <taxon>Tracheophyta</taxon>
        <taxon>Spermatophyta</taxon>
        <taxon>Magnoliopsida</taxon>
        <taxon>eudicotyledons</taxon>
        <taxon>Gunneridae</taxon>
        <taxon>Pentapetalae</taxon>
        <taxon>rosids</taxon>
        <taxon>malvids</taxon>
        <taxon>Brassicales</taxon>
        <taxon>Brassicaceae</taxon>
        <taxon>Camelineae</taxon>
        <taxon>Arabidopsis</taxon>
    </lineage>
</organism>
<accession>O22763</accession>
<accession>C0Z2B4</accession>
<accession>Q8RXJ3</accession>
<accession>Q9FUD4</accession>
<sequence length="411" mass="45358">MNSIFSIDDFSDPFWETPPIPLNPDSSKPVTADEVSQSQPEWTFEMFLEEISSSAVSSEPLGNNNNAIVGVSSAQSLPSVSGQNDFEDDSRFRDRDSGNLDCAAPMTTKTVIVDSDDYRRVLKNKLETECATVVSLRVGSVKPEDSTSSPETQLQPVQSSPLTQGELGVTSSLPAEVKKTGVSMKQVTSGSSREYSDDEDLDEENETTGSLKPEDVKKSRRMLSNRESARRSRRRKQEQTSDLETQVNDLKGEHSSLLKQLSNMNHKYDEAAVGNRILKADIETLRAKVKMAEETVKRVTGMNPMLLGRSSGHNNNNRMPITGNNRMDSSSIIPAYQPHSNLNHMSNQNIGIPTILPPRLGNNFAAPPSQTSSPLQRIRNGQNHHVTPSANPYGWNTEPQNDSAWPKKCVD</sequence>